<protein>
    <recommendedName>
        <fullName>UPF0425 pyridoxal phosphate-dependent protein MTH_1914</fullName>
    </recommendedName>
</protein>
<dbReference type="EMBL" id="AE000666">
    <property type="protein sequence ID" value="AAB86374.1"/>
    <property type="molecule type" value="Genomic_DNA"/>
</dbReference>
<dbReference type="PIR" id="F69122">
    <property type="entry name" value="F69122"/>
</dbReference>
<dbReference type="RefSeq" id="WP_010877510.1">
    <property type="nucleotide sequence ID" value="NC_000916.1"/>
</dbReference>
<dbReference type="SMR" id="O27936"/>
<dbReference type="FunCoup" id="O27936">
    <property type="interactions" value="27"/>
</dbReference>
<dbReference type="STRING" id="187420.MTH_1914"/>
<dbReference type="PaxDb" id="187420-MTH_1914"/>
<dbReference type="EnsemblBacteria" id="AAB86374">
    <property type="protein sequence ID" value="AAB86374"/>
    <property type="gene ID" value="MTH_1914"/>
</dbReference>
<dbReference type="GeneID" id="1470999"/>
<dbReference type="KEGG" id="mth:MTH_1914"/>
<dbReference type="PATRIC" id="fig|187420.15.peg.1870"/>
<dbReference type="HOGENOM" id="CLU_055443_0_0_2"/>
<dbReference type="InParanoid" id="O27936"/>
<dbReference type="Proteomes" id="UP000005223">
    <property type="component" value="Chromosome"/>
</dbReference>
<dbReference type="GO" id="GO:0004125">
    <property type="term" value="F:L-seryl-tRNA(Sec) selenium transferase activity"/>
    <property type="evidence" value="ECO:0007669"/>
    <property type="project" value="TreeGrafter"/>
</dbReference>
<dbReference type="Gene3D" id="3.90.1150.70">
    <property type="match status" value="1"/>
</dbReference>
<dbReference type="Gene3D" id="3.40.640.10">
    <property type="entry name" value="Type I PLP-dependent aspartate aminotransferase-like (Major domain)"/>
    <property type="match status" value="1"/>
</dbReference>
<dbReference type="InterPro" id="IPR020033">
    <property type="entry name" value="PyrdxlP-dep_transferase_arc"/>
</dbReference>
<dbReference type="InterPro" id="IPR015424">
    <property type="entry name" value="PyrdxlP-dep_Trfase"/>
</dbReference>
<dbReference type="InterPro" id="IPR015421">
    <property type="entry name" value="PyrdxlP-dep_Trfase_major"/>
</dbReference>
<dbReference type="InterPro" id="IPR018319">
    <property type="entry name" value="SelA-like"/>
</dbReference>
<dbReference type="InterPro" id="IPR055177">
    <property type="entry name" value="UPF0425_MJ0158-like_C"/>
</dbReference>
<dbReference type="NCBIfam" id="TIGR03576">
    <property type="entry name" value="pyridox_MJ0158"/>
    <property type="match status" value="1"/>
</dbReference>
<dbReference type="PANTHER" id="PTHR32328">
    <property type="entry name" value="L-SERYL-TRNA(SEC) SELENIUM TRANSFERASE"/>
    <property type="match status" value="1"/>
</dbReference>
<dbReference type="PANTHER" id="PTHR32328:SF0">
    <property type="entry name" value="L-SERYL-TRNA(SEC) SELENIUM TRANSFERASE"/>
    <property type="match status" value="1"/>
</dbReference>
<dbReference type="Pfam" id="PF03841">
    <property type="entry name" value="SelA"/>
    <property type="match status" value="1"/>
</dbReference>
<dbReference type="Pfam" id="PF22583">
    <property type="entry name" value="UPF0425_C"/>
    <property type="match status" value="1"/>
</dbReference>
<dbReference type="SUPFAM" id="SSF53383">
    <property type="entry name" value="PLP-dependent transferases"/>
    <property type="match status" value="1"/>
</dbReference>
<name>Y1914_METTH</name>
<keyword id="KW-0663">Pyridoxal phosphate</keyword>
<keyword id="KW-1185">Reference proteome</keyword>
<reference key="1">
    <citation type="journal article" date="1997" name="J. Bacteriol.">
        <title>Complete genome sequence of Methanobacterium thermoautotrophicum deltaH: functional analysis and comparative genomics.</title>
        <authorList>
            <person name="Smith D.R."/>
            <person name="Doucette-Stamm L.A."/>
            <person name="Deloughery C."/>
            <person name="Lee H.-M."/>
            <person name="Dubois J."/>
            <person name="Aldredge T."/>
            <person name="Bashirzadeh R."/>
            <person name="Blakely D."/>
            <person name="Cook R."/>
            <person name="Gilbert K."/>
            <person name="Harrison D."/>
            <person name="Hoang L."/>
            <person name="Keagle P."/>
            <person name="Lumm W."/>
            <person name="Pothier B."/>
            <person name="Qiu D."/>
            <person name="Spadafora R."/>
            <person name="Vicare R."/>
            <person name="Wang Y."/>
            <person name="Wierzbowski J."/>
            <person name="Gibson R."/>
            <person name="Jiwani N."/>
            <person name="Caruso A."/>
            <person name="Bush D."/>
            <person name="Safer H."/>
            <person name="Patwell D."/>
            <person name="Prabhakar S."/>
            <person name="McDougall S."/>
            <person name="Shimer G."/>
            <person name="Goyal A."/>
            <person name="Pietrovski S."/>
            <person name="Church G.M."/>
            <person name="Daniels C.J."/>
            <person name="Mao J.-I."/>
            <person name="Rice P."/>
            <person name="Noelling J."/>
            <person name="Reeve J.N."/>
        </authorList>
    </citation>
    <scope>NUCLEOTIDE SEQUENCE [LARGE SCALE GENOMIC DNA]</scope>
    <source>
        <strain>ATCC 29096 / DSM 1053 / JCM 10044 / NBRC 100330 / Delta H</strain>
    </source>
</reference>
<accession>O27936</accession>
<comment type="cofactor">
    <cofactor evidence="1">
        <name>pyridoxal 5'-phosphate</name>
        <dbReference type="ChEBI" id="CHEBI:597326"/>
    </cofactor>
</comment>
<comment type="similarity">
    <text evidence="2">Belongs to the UPF0425 family.</text>
</comment>
<comment type="caution">
    <text evidence="2">Despite a certain similarity to selA, this is not selA (see AC Q57622).</text>
</comment>
<sequence length="377" mass="41074">MLEDPVNEVKRREHALRIIGEKMKKHGRDGIYDLTGLSGGFPLEEEDLDLIETYVGPAIFEEKLQEAGREHMGGEMIAAFNRTSSAILAAVLALTEPGSTVFHYLPELPSHPSVPGSTELASAGYQETEDFTEKPPADTSLVVVTGSTMDHRVVGESDLVRVIEIAHDAGIPVLVDDASGARLRTVLYGQRRACDLGADLAVTSTDKLMHGPRGGLMAGRAELIERVKSKAYQFGLEAQPPLVAAMVRALEEFEPSEIRDAIKRKEEFLRDFRGPEVEETPTGFIIKSSSLEDLQGSGYDGDEISTALSMILLSEHGIVTIPAVGMPGASKTLRFDLAARDAGRIEISFLREAIYDAIKLVSGFINDDEKMRRLILG</sequence>
<proteinExistence type="inferred from homology"/>
<evidence type="ECO:0000250" key="1"/>
<evidence type="ECO:0000305" key="2"/>
<organism>
    <name type="scientific">Methanothermobacter thermautotrophicus (strain ATCC 29096 / DSM 1053 / JCM 10044 / NBRC 100330 / Delta H)</name>
    <name type="common">Methanobacterium thermoautotrophicum</name>
    <dbReference type="NCBI Taxonomy" id="187420"/>
    <lineage>
        <taxon>Archaea</taxon>
        <taxon>Methanobacteriati</taxon>
        <taxon>Methanobacteriota</taxon>
        <taxon>Methanomada group</taxon>
        <taxon>Methanobacteria</taxon>
        <taxon>Methanobacteriales</taxon>
        <taxon>Methanobacteriaceae</taxon>
        <taxon>Methanothermobacter</taxon>
    </lineage>
</organism>
<feature type="chain" id="PRO_0000285290" description="UPF0425 pyridoxal phosphate-dependent protein MTH_1914">
    <location>
        <begin position="1"/>
        <end position="377"/>
    </location>
</feature>
<feature type="modified residue" description="N6-(pyridoxal phosphate)lysine" evidence="1">
    <location>
        <position position="207"/>
    </location>
</feature>
<gene>
    <name type="ordered locus">MTH_1914</name>
</gene>